<proteinExistence type="inferred from homology"/>
<organism>
    <name type="scientific">Corynebacterium urealyticum (strain ATCC 43042 / DSM 7109)</name>
    <dbReference type="NCBI Taxonomy" id="504474"/>
    <lineage>
        <taxon>Bacteria</taxon>
        <taxon>Bacillati</taxon>
        <taxon>Actinomycetota</taxon>
        <taxon>Actinomycetes</taxon>
        <taxon>Mycobacteriales</taxon>
        <taxon>Corynebacteriaceae</taxon>
        <taxon>Corynebacterium</taxon>
    </lineage>
</organism>
<gene>
    <name evidence="1" type="primary">glmM</name>
    <name type="ordered locus">cu0378</name>
</gene>
<protein>
    <recommendedName>
        <fullName evidence="1">Phosphoglucosamine mutase</fullName>
        <ecNumber evidence="1">5.4.2.10</ecNumber>
    </recommendedName>
</protein>
<accession>B1VEZ9</accession>
<keyword id="KW-0413">Isomerase</keyword>
<keyword id="KW-0460">Magnesium</keyword>
<keyword id="KW-0479">Metal-binding</keyword>
<keyword id="KW-0597">Phosphoprotein</keyword>
<keyword id="KW-1185">Reference proteome</keyword>
<sequence length="446" mass="46797">MGRLFGTDGVRGLANEKLTAPLAMRLGAAAARVLTEKKSTDRRPTAIIGRDPRVSGEMLTAALSAGLASQGVDVLDVGVLPTPAVAFLTDDYGSDMGVMVSASHNPMPDNGIKFFAIGGRKLEDWIEDEIEQEMGKLPEEGPTGAAIGRVFDQSHSALDRYLHHLQQAVHTRLDGIKVVVDCAHGAAYQAAPMAYEAAGAEVVAVSNKPNGYNINDGVGSTHIDQLQKAVVEHGADLGLAHDGDADRCLAVDAQGNVVDGDQIMAVLALSMKDGGELKRNTLVATVMSNLGLKLAMERNGITLRQTQVGDRYVVEDLRAGDYSLGGEQSGHIVIPEHGTTGDGLLTGLFLMARMATTGKTLAELASAMQVLPQTLINVPVSNKAAIAGDARVKQAIAKAEEELGETGRVLLRPSGTEELFRVMVEAADSATARKIAGQLAAVVAEV</sequence>
<dbReference type="EC" id="5.4.2.10" evidence="1"/>
<dbReference type="EMBL" id="AM942444">
    <property type="protein sequence ID" value="CAQ04338.1"/>
    <property type="molecule type" value="Genomic_DNA"/>
</dbReference>
<dbReference type="RefSeq" id="WP_012359631.1">
    <property type="nucleotide sequence ID" value="NC_010545.1"/>
</dbReference>
<dbReference type="SMR" id="B1VEZ9"/>
<dbReference type="STRING" id="504474.cu0378"/>
<dbReference type="GeneID" id="60605180"/>
<dbReference type="KEGG" id="cur:cu0378"/>
<dbReference type="eggNOG" id="COG1109">
    <property type="taxonomic scope" value="Bacteria"/>
</dbReference>
<dbReference type="HOGENOM" id="CLU_016950_7_0_11"/>
<dbReference type="Proteomes" id="UP000001727">
    <property type="component" value="Chromosome"/>
</dbReference>
<dbReference type="GO" id="GO:0005829">
    <property type="term" value="C:cytosol"/>
    <property type="evidence" value="ECO:0007669"/>
    <property type="project" value="TreeGrafter"/>
</dbReference>
<dbReference type="GO" id="GO:0000287">
    <property type="term" value="F:magnesium ion binding"/>
    <property type="evidence" value="ECO:0007669"/>
    <property type="project" value="UniProtKB-UniRule"/>
</dbReference>
<dbReference type="GO" id="GO:0008966">
    <property type="term" value="F:phosphoglucosamine mutase activity"/>
    <property type="evidence" value="ECO:0007669"/>
    <property type="project" value="UniProtKB-UniRule"/>
</dbReference>
<dbReference type="GO" id="GO:0004615">
    <property type="term" value="F:phosphomannomutase activity"/>
    <property type="evidence" value="ECO:0007669"/>
    <property type="project" value="TreeGrafter"/>
</dbReference>
<dbReference type="GO" id="GO:0005975">
    <property type="term" value="P:carbohydrate metabolic process"/>
    <property type="evidence" value="ECO:0007669"/>
    <property type="project" value="InterPro"/>
</dbReference>
<dbReference type="GO" id="GO:0009252">
    <property type="term" value="P:peptidoglycan biosynthetic process"/>
    <property type="evidence" value="ECO:0007669"/>
    <property type="project" value="TreeGrafter"/>
</dbReference>
<dbReference type="GO" id="GO:0006048">
    <property type="term" value="P:UDP-N-acetylglucosamine biosynthetic process"/>
    <property type="evidence" value="ECO:0007669"/>
    <property type="project" value="TreeGrafter"/>
</dbReference>
<dbReference type="CDD" id="cd05802">
    <property type="entry name" value="GlmM"/>
    <property type="match status" value="1"/>
</dbReference>
<dbReference type="FunFam" id="3.30.310.50:FF:000001">
    <property type="entry name" value="Phosphoglucosamine mutase"/>
    <property type="match status" value="1"/>
</dbReference>
<dbReference type="FunFam" id="3.40.120.10:FF:000001">
    <property type="entry name" value="Phosphoglucosamine mutase"/>
    <property type="match status" value="1"/>
</dbReference>
<dbReference type="FunFam" id="3.40.120.10:FF:000002">
    <property type="entry name" value="Phosphoglucosamine mutase"/>
    <property type="match status" value="1"/>
</dbReference>
<dbReference type="Gene3D" id="3.40.120.10">
    <property type="entry name" value="Alpha-D-Glucose-1,6-Bisphosphate, subunit A, domain 3"/>
    <property type="match status" value="3"/>
</dbReference>
<dbReference type="Gene3D" id="3.30.310.50">
    <property type="entry name" value="Alpha-D-phosphohexomutase, C-terminal domain"/>
    <property type="match status" value="1"/>
</dbReference>
<dbReference type="HAMAP" id="MF_01554_B">
    <property type="entry name" value="GlmM_B"/>
    <property type="match status" value="1"/>
</dbReference>
<dbReference type="InterPro" id="IPR005844">
    <property type="entry name" value="A-D-PHexomutase_a/b/a-I"/>
</dbReference>
<dbReference type="InterPro" id="IPR016055">
    <property type="entry name" value="A-D-PHexomutase_a/b/a-I/II/III"/>
</dbReference>
<dbReference type="InterPro" id="IPR005845">
    <property type="entry name" value="A-D-PHexomutase_a/b/a-II"/>
</dbReference>
<dbReference type="InterPro" id="IPR005846">
    <property type="entry name" value="A-D-PHexomutase_a/b/a-III"/>
</dbReference>
<dbReference type="InterPro" id="IPR005843">
    <property type="entry name" value="A-D-PHexomutase_C"/>
</dbReference>
<dbReference type="InterPro" id="IPR036900">
    <property type="entry name" value="A-D-PHexomutase_C_sf"/>
</dbReference>
<dbReference type="InterPro" id="IPR016066">
    <property type="entry name" value="A-D-PHexomutase_CS"/>
</dbReference>
<dbReference type="InterPro" id="IPR005841">
    <property type="entry name" value="Alpha-D-phosphohexomutase_SF"/>
</dbReference>
<dbReference type="InterPro" id="IPR006352">
    <property type="entry name" value="GlmM_bact"/>
</dbReference>
<dbReference type="InterPro" id="IPR050060">
    <property type="entry name" value="Phosphoglucosamine_mutase"/>
</dbReference>
<dbReference type="NCBIfam" id="TIGR01455">
    <property type="entry name" value="glmM"/>
    <property type="match status" value="1"/>
</dbReference>
<dbReference type="PANTHER" id="PTHR42946:SF1">
    <property type="entry name" value="PHOSPHOGLUCOMUTASE (ALPHA-D-GLUCOSE-1,6-BISPHOSPHATE-DEPENDENT)"/>
    <property type="match status" value="1"/>
</dbReference>
<dbReference type="PANTHER" id="PTHR42946">
    <property type="entry name" value="PHOSPHOHEXOSE MUTASE"/>
    <property type="match status" value="1"/>
</dbReference>
<dbReference type="Pfam" id="PF02878">
    <property type="entry name" value="PGM_PMM_I"/>
    <property type="match status" value="1"/>
</dbReference>
<dbReference type="Pfam" id="PF02879">
    <property type="entry name" value="PGM_PMM_II"/>
    <property type="match status" value="1"/>
</dbReference>
<dbReference type="Pfam" id="PF02880">
    <property type="entry name" value="PGM_PMM_III"/>
    <property type="match status" value="1"/>
</dbReference>
<dbReference type="Pfam" id="PF00408">
    <property type="entry name" value="PGM_PMM_IV"/>
    <property type="match status" value="1"/>
</dbReference>
<dbReference type="PRINTS" id="PR00509">
    <property type="entry name" value="PGMPMM"/>
</dbReference>
<dbReference type="SUPFAM" id="SSF55957">
    <property type="entry name" value="Phosphoglucomutase, C-terminal domain"/>
    <property type="match status" value="1"/>
</dbReference>
<dbReference type="SUPFAM" id="SSF53738">
    <property type="entry name" value="Phosphoglucomutase, first 3 domains"/>
    <property type="match status" value="3"/>
</dbReference>
<dbReference type="PROSITE" id="PS00710">
    <property type="entry name" value="PGM_PMM"/>
    <property type="match status" value="1"/>
</dbReference>
<name>GLMM_CORU7</name>
<evidence type="ECO:0000255" key="1">
    <source>
        <dbReference type="HAMAP-Rule" id="MF_01554"/>
    </source>
</evidence>
<comment type="function">
    <text evidence="1">Catalyzes the conversion of glucosamine-6-phosphate to glucosamine-1-phosphate.</text>
</comment>
<comment type="catalytic activity">
    <reaction evidence="1">
        <text>alpha-D-glucosamine 1-phosphate = D-glucosamine 6-phosphate</text>
        <dbReference type="Rhea" id="RHEA:23424"/>
        <dbReference type="ChEBI" id="CHEBI:58516"/>
        <dbReference type="ChEBI" id="CHEBI:58725"/>
        <dbReference type="EC" id="5.4.2.10"/>
    </reaction>
</comment>
<comment type="cofactor">
    <cofactor evidence="1">
        <name>Mg(2+)</name>
        <dbReference type="ChEBI" id="CHEBI:18420"/>
    </cofactor>
    <text evidence="1">Binds 1 Mg(2+) ion per subunit.</text>
</comment>
<comment type="PTM">
    <text evidence="1">Activated by phosphorylation.</text>
</comment>
<comment type="similarity">
    <text evidence="1">Belongs to the phosphohexose mutase family.</text>
</comment>
<reference key="1">
    <citation type="journal article" date="2008" name="J. Biotechnol.">
        <title>The lifestyle of Corynebacterium urealyticum derived from its complete genome sequence established by pyrosequencing.</title>
        <authorList>
            <person name="Tauch A."/>
            <person name="Trost E."/>
            <person name="Tilker A."/>
            <person name="Ludewig U."/>
            <person name="Schneiker S."/>
            <person name="Goesmann A."/>
            <person name="Arnold W."/>
            <person name="Bekel T."/>
            <person name="Brinkrolf K."/>
            <person name="Brune I."/>
            <person name="Goetker S."/>
            <person name="Kalinowski J."/>
            <person name="Kamp P.-B."/>
            <person name="Lobo F.P."/>
            <person name="Viehoever P."/>
            <person name="Weisshaar B."/>
            <person name="Soriano F."/>
            <person name="Droege M."/>
            <person name="Puehler A."/>
        </authorList>
    </citation>
    <scope>NUCLEOTIDE SEQUENCE [LARGE SCALE GENOMIC DNA]</scope>
    <source>
        <strain>ATCC 43042 / DSM 7109</strain>
    </source>
</reference>
<feature type="chain" id="PRO_1000201079" description="Phosphoglucosamine mutase">
    <location>
        <begin position="1"/>
        <end position="446"/>
    </location>
</feature>
<feature type="active site" description="Phosphoserine intermediate" evidence="1">
    <location>
        <position position="103"/>
    </location>
</feature>
<feature type="binding site" description="via phosphate group" evidence="1">
    <location>
        <position position="103"/>
    </location>
    <ligand>
        <name>Mg(2+)</name>
        <dbReference type="ChEBI" id="CHEBI:18420"/>
    </ligand>
</feature>
<feature type="binding site" evidence="1">
    <location>
        <position position="242"/>
    </location>
    <ligand>
        <name>Mg(2+)</name>
        <dbReference type="ChEBI" id="CHEBI:18420"/>
    </ligand>
</feature>
<feature type="binding site" evidence="1">
    <location>
        <position position="244"/>
    </location>
    <ligand>
        <name>Mg(2+)</name>
        <dbReference type="ChEBI" id="CHEBI:18420"/>
    </ligand>
</feature>
<feature type="binding site" evidence="1">
    <location>
        <position position="246"/>
    </location>
    <ligand>
        <name>Mg(2+)</name>
        <dbReference type="ChEBI" id="CHEBI:18420"/>
    </ligand>
</feature>
<feature type="modified residue" description="Phosphoserine" evidence="1">
    <location>
        <position position="103"/>
    </location>
</feature>